<sequence length="113" mass="11934">MTFPFSGAAVKRMLVTGVVLPFGLLVAAGQAQADSQWGSGKNLYDKVCGHCHKPEVGVGPVLEGRGLPEAYIKDIVRNGFRAMPAFPASYVDDESLTQVAEYLSSLPAPAAQP</sequence>
<proteinExistence type="evidence at protein level"/>
<dbReference type="EMBL" id="U96339">
    <property type="protein sequence ID" value="AAA80317.2"/>
    <property type="molecule type" value="Genomic_DNA"/>
</dbReference>
<dbReference type="EMBL" id="U96338">
    <property type="protein sequence ID" value="AAA80319.2"/>
    <property type="molecule type" value="Genomic_DNA"/>
</dbReference>
<dbReference type="PIR" id="T46685">
    <property type="entry name" value="T46685"/>
</dbReference>
<dbReference type="PDB" id="1DII">
    <property type="method" value="X-ray"/>
    <property type="resolution" value="2.50 A"/>
    <property type="chains" value="C/D=34-113"/>
</dbReference>
<dbReference type="PDB" id="1DIQ">
    <property type="method" value="X-ray"/>
    <property type="resolution" value="2.75 A"/>
    <property type="chains" value="C/D=34-113"/>
</dbReference>
<dbReference type="PDB" id="1WVE">
    <property type="method" value="X-ray"/>
    <property type="resolution" value="1.85 A"/>
    <property type="chains" value="C/D=34-113"/>
</dbReference>
<dbReference type="PDBsum" id="1DII"/>
<dbReference type="PDBsum" id="1DIQ"/>
<dbReference type="PDBsum" id="1WVE"/>
<dbReference type="SMR" id="P09787"/>
<dbReference type="IntAct" id="P09787">
    <property type="interactions" value="1"/>
</dbReference>
<dbReference type="BioCyc" id="MetaCyc:MONOMER-19459"/>
<dbReference type="UniPathway" id="UPA00708"/>
<dbReference type="EvolutionaryTrace" id="P09787"/>
<dbReference type="GO" id="GO:0009055">
    <property type="term" value="F:electron transfer activity"/>
    <property type="evidence" value="ECO:0007669"/>
    <property type="project" value="InterPro"/>
</dbReference>
<dbReference type="GO" id="GO:0020037">
    <property type="term" value="F:heme binding"/>
    <property type="evidence" value="ECO:0007669"/>
    <property type="project" value="InterPro"/>
</dbReference>
<dbReference type="GO" id="GO:0046872">
    <property type="term" value="F:metal ion binding"/>
    <property type="evidence" value="ECO:0007669"/>
    <property type="project" value="UniProtKB-KW"/>
</dbReference>
<dbReference type="Gene3D" id="1.10.760.10">
    <property type="entry name" value="Cytochrome c-like domain"/>
    <property type="match status" value="1"/>
</dbReference>
<dbReference type="InterPro" id="IPR009056">
    <property type="entry name" value="Cyt_c-like_dom"/>
</dbReference>
<dbReference type="InterPro" id="IPR036909">
    <property type="entry name" value="Cyt_c-like_dom_sf"/>
</dbReference>
<dbReference type="Pfam" id="PF13442">
    <property type="entry name" value="Cytochrome_CBB3"/>
    <property type="match status" value="1"/>
</dbReference>
<dbReference type="SUPFAM" id="SSF46626">
    <property type="entry name" value="Cytochrome c"/>
    <property type="match status" value="1"/>
</dbReference>
<dbReference type="PROSITE" id="PS51007">
    <property type="entry name" value="CYTC"/>
    <property type="match status" value="1"/>
</dbReference>
<accession>P09787</accession>
<accession>Q59698</accession>
<accession>Q59707</accession>
<organism>
    <name type="scientific">Pseudomonas putida</name>
    <name type="common">Arthrobacter siderocapsulatus</name>
    <dbReference type="NCBI Taxonomy" id="303"/>
    <lineage>
        <taxon>Bacteria</taxon>
        <taxon>Pseudomonadati</taxon>
        <taxon>Pseudomonadota</taxon>
        <taxon>Gammaproteobacteria</taxon>
        <taxon>Pseudomonadales</taxon>
        <taxon>Pseudomonadaceae</taxon>
        <taxon>Pseudomonas</taxon>
    </lineage>
</organism>
<feature type="signal peptide" evidence="1">
    <location>
        <begin position="1"/>
        <end position="33"/>
    </location>
</feature>
<feature type="chain" id="PRO_0000006567" description="4-cresol dehydrogenase [hydroxylating] cytochrome c subunit">
    <location>
        <begin position="34"/>
        <end position="113"/>
    </location>
</feature>
<feature type="binding site" description="covalent">
    <location>
        <position position="48"/>
    </location>
    <ligand>
        <name>heme c</name>
        <dbReference type="ChEBI" id="CHEBI:61717"/>
    </ligand>
</feature>
<feature type="binding site" description="covalent">
    <location>
        <position position="51"/>
    </location>
    <ligand>
        <name>heme c</name>
        <dbReference type="ChEBI" id="CHEBI:61717"/>
    </ligand>
</feature>
<feature type="binding site" description="axial binding residue">
    <location>
        <position position="52"/>
    </location>
    <ligand>
        <name>heme c</name>
        <dbReference type="ChEBI" id="CHEBI:61717"/>
    </ligand>
    <ligandPart>
        <name>Fe</name>
        <dbReference type="ChEBI" id="CHEBI:18248"/>
    </ligandPart>
</feature>
<feature type="binding site" description="axial binding residue">
    <location>
        <position position="83"/>
    </location>
    <ligand>
        <name>heme c</name>
        <dbReference type="ChEBI" id="CHEBI:61717"/>
    </ligand>
    <ligandPart>
        <name>Fe</name>
        <dbReference type="ChEBI" id="CHEBI:18248"/>
    </ligandPart>
</feature>
<feature type="sequence variant" description="In strain: NCIMB 9866.">
    <original>D</original>
    <variation>A</variation>
    <location>
        <position position="74"/>
    </location>
</feature>
<feature type="sequence conflict" description="In Ref. 3; AA sequence." evidence="2" ref="3">
    <location>
        <position position="111"/>
    </location>
</feature>
<feature type="sequence conflict" description="In Ref. 3; AA sequence." evidence="2" ref="3">
    <location>
        <position position="113"/>
    </location>
</feature>
<feature type="strand" evidence="3">
    <location>
        <begin position="37"/>
        <end position="39"/>
    </location>
</feature>
<feature type="helix" evidence="3">
    <location>
        <begin position="40"/>
        <end position="46"/>
    </location>
</feature>
<feature type="helix" evidence="3">
    <location>
        <begin position="49"/>
        <end position="52"/>
    </location>
</feature>
<feature type="turn" evidence="3">
    <location>
        <begin position="54"/>
        <end position="56"/>
    </location>
</feature>
<feature type="helix" evidence="3">
    <location>
        <begin position="69"/>
        <end position="78"/>
    </location>
</feature>
<feature type="turn" evidence="3">
    <location>
        <begin position="88"/>
        <end position="90"/>
    </location>
</feature>
<feature type="helix" evidence="3">
    <location>
        <begin position="93"/>
        <end position="105"/>
    </location>
</feature>
<name>CY4C_PSEPU</name>
<reference key="1">
    <citation type="journal article" date="1994" name="J. Bacteriol.">
        <title>Cloning, sequencing, and expression of the structural genes for the cytochrome and flavoprotein subunits of p-cresol methylhydroxylase from two strains of Pseudomonas putida.</title>
        <authorList>
            <person name="Kim J.-H."/>
            <person name="Fuller J.H."/>
            <person name="Cecchini G."/>
            <person name="McIntire W.S."/>
        </authorList>
    </citation>
    <scope>NUCLEOTIDE SEQUENCE [GENOMIC DNA]</scope>
    <source>
        <strain>NCIMB 9866</strain>
        <strain>NCIMB 9869</strain>
        <plasmid>pRA4000</plasmid>
        <plasmid>pRA500</plasmid>
    </source>
</reference>
<reference key="2">
    <citation type="journal article" date="1999" name="DNA Seq.">
        <title>Organization and sequences of p-hydroxybenzaldehyde dehydrogenase and other plasmid-encoded genes for early enzymes of the p-cresol degradative pathway in Pseudomonas putida NCIMB 9866 and 9869.</title>
        <authorList>
            <person name="Cronin C.N."/>
            <person name="Kim J.-H."/>
            <person name="Fuller J.H."/>
            <person name="Zhang X.-P."/>
            <person name="McIntire W.S."/>
        </authorList>
    </citation>
    <scope>NUCLEOTIDE SEQUENCE [GENOMIC DNA]</scope>
    <source>
        <strain>NCIMB 9866</strain>
        <strain>NCIMB 9869</strain>
        <plasmid>pRA4000</plasmid>
        <plasmid>pRA500</plasmid>
    </source>
</reference>
<reference key="3">
    <citation type="journal article" date="1986" name="Biochemistry">
        <title>Amino acid and sequence analysis of the cytochrome and flavoprotein subunits of p-cresol methylhydroxylase.</title>
        <authorList>
            <person name="McIntire W.S."/>
            <person name="Singer T.P."/>
            <person name="Smith A.J."/>
            <person name="Mathews F.S."/>
        </authorList>
    </citation>
    <scope>PROTEIN SEQUENCE OF 34-113</scope>
    <scope>CHARACTERIZATION</scope>
    <source>
        <strain>NCIMB 9869</strain>
        <plasmid>pRA500</plasmid>
    </source>
</reference>
<reference key="4">
    <citation type="journal article" date="1991" name="Biochemistry">
        <title>Three-dimensional structure of p-cresol methylhydroxylase (flavocytochrome c) from Pseudomonas putida at 3.0-A resolution.</title>
        <authorList>
            <person name="Mathews F.S."/>
            <person name="Chen Z.-W."/>
            <person name="Bellamy H.D."/>
            <person name="McIntire W.S."/>
        </authorList>
    </citation>
    <scope>X-RAY CRYSTALLOGRAPHY (3.0 ANGSTROMS)</scope>
    <source>
        <strain>NCIMB 9869</strain>
        <plasmid>pRA500</plasmid>
    </source>
</reference>
<reference key="5">
    <citation type="journal article" date="2000" name="J. Mol. Biol.">
        <title>Structures of the flavocytochrome p-cresol methylhydroxylase and its enzyme-substrate complex: gated substrate entry and proton relays support the proposed catalytic mechanism.</title>
        <authorList>
            <person name="Cunane L.M."/>
            <person name="Chen Z.-W."/>
            <person name="Shamala N."/>
            <person name="Mathews F.S."/>
            <person name="Cronin C.N."/>
            <person name="McIntire W.S."/>
        </authorList>
    </citation>
    <scope>X-RAY CRYSTALLOGRAPHY (2.5 ANGSTROMS)</scope>
    <source>
        <strain>NCIMB 9869</strain>
        <plasmid>pRA500</plasmid>
    </source>
</reference>
<protein>
    <recommendedName>
        <fullName>4-cresol dehydrogenase [hydroxylating] cytochrome c subunit</fullName>
    </recommendedName>
    <alternativeName>
        <fullName>Flavocytochrome c</fullName>
    </alternativeName>
    <alternativeName>
        <fullName>P-cresol methylhydroxylase cytochrome subunit</fullName>
    </alternativeName>
</protein>
<comment type="function">
    <text>This is the heme-containing component of the p-cresol methylhydroxylase. It accepts electrons from the flavoprotein subunit.</text>
</comment>
<comment type="pathway">
    <text>Aromatic compound metabolism; p-cresol degradation.</text>
</comment>
<comment type="subunit">
    <text>Tetramer of two cytochrome subunits and two flavoprotein subunits.</text>
</comment>
<comment type="PTM">
    <text>Binds 1 heme c group covalently per subunit.</text>
</comment>
<evidence type="ECO:0000269" key="1">
    <source>
    </source>
</evidence>
<evidence type="ECO:0000305" key="2"/>
<evidence type="ECO:0007829" key="3">
    <source>
        <dbReference type="PDB" id="1WVE"/>
    </source>
</evidence>
<keyword id="KW-0002">3D-structure</keyword>
<keyword id="KW-0903">Direct protein sequencing</keyword>
<keyword id="KW-0249">Electron transport</keyword>
<keyword id="KW-0349">Heme</keyword>
<keyword id="KW-0408">Iron</keyword>
<keyword id="KW-0479">Metal-binding</keyword>
<keyword id="KW-0614">Plasmid</keyword>
<keyword id="KW-0732">Signal</keyword>
<keyword id="KW-0813">Transport</keyword>
<gene>
    <name type="primary">pchC</name>
</gene>
<geneLocation type="plasmid">
    <name>pRA4000</name>
</geneLocation>
<geneLocation type="plasmid">
    <name>pRA500</name>
</geneLocation>